<name>SYE_STRR6</name>
<accession>Q8CWN5</accession>
<comment type="function">
    <text evidence="1">Catalyzes the attachment of glutamate to tRNA(Glu) in a two-step reaction: glutamate is first activated by ATP to form Glu-AMP and then transferred to the acceptor end of tRNA(Glu).</text>
</comment>
<comment type="catalytic activity">
    <reaction evidence="1">
        <text>tRNA(Glu) + L-glutamate + ATP = L-glutamyl-tRNA(Glu) + AMP + diphosphate</text>
        <dbReference type="Rhea" id="RHEA:23540"/>
        <dbReference type="Rhea" id="RHEA-COMP:9663"/>
        <dbReference type="Rhea" id="RHEA-COMP:9680"/>
        <dbReference type="ChEBI" id="CHEBI:29985"/>
        <dbReference type="ChEBI" id="CHEBI:30616"/>
        <dbReference type="ChEBI" id="CHEBI:33019"/>
        <dbReference type="ChEBI" id="CHEBI:78442"/>
        <dbReference type="ChEBI" id="CHEBI:78520"/>
        <dbReference type="ChEBI" id="CHEBI:456215"/>
        <dbReference type="EC" id="6.1.1.17"/>
    </reaction>
</comment>
<comment type="subunit">
    <text evidence="1">Monomer.</text>
</comment>
<comment type="subcellular location">
    <subcellularLocation>
        <location evidence="1">Cytoplasm</location>
    </subcellularLocation>
</comment>
<comment type="similarity">
    <text evidence="1">Belongs to the class-I aminoacyl-tRNA synthetase family. Glutamate--tRNA ligase type 1 subfamily.</text>
</comment>
<dbReference type="EC" id="6.1.1.17" evidence="1"/>
<dbReference type="EMBL" id="AE007317">
    <property type="protein sequence ID" value="AAL00683.1"/>
    <property type="molecule type" value="Genomic_DNA"/>
</dbReference>
<dbReference type="PIR" id="F98106">
    <property type="entry name" value="F98106"/>
</dbReference>
<dbReference type="RefSeq" id="NP_359472.1">
    <property type="nucleotide sequence ID" value="NC_003098.1"/>
</dbReference>
<dbReference type="RefSeq" id="WP_000031084.1">
    <property type="nucleotide sequence ID" value="NC_003098.1"/>
</dbReference>
<dbReference type="SMR" id="Q8CWN5"/>
<dbReference type="STRING" id="171101.spr1881"/>
<dbReference type="KEGG" id="spr:spr1881"/>
<dbReference type="PATRIC" id="fig|171101.6.peg.2030"/>
<dbReference type="eggNOG" id="COG0008">
    <property type="taxonomic scope" value="Bacteria"/>
</dbReference>
<dbReference type="HOGENOM" id="CLU_015768_6_1_9"/>
<dbReference type="Proteomes" id="UP000000586">
    <property type="component" value="Chromosome"/>
</dbReference>
<dbReference type="GO" id="GO:0005829">
    <property type="term" value="C:cytosol"/>
    <property type="evidence" value="ECO:0000318"/>
    <property type="project" value="GO_Central"/>
</dbReference>
<dbReference type="GO" id="GO:0005524">
    <property type="term" value="F:ATP binding"/>
    <property type="evidence" value="ECO:0007669"/>
    <property type="project" value="UniProtKB-UniRule"/>
</dbReference>
<dbReference type="GO" id="GO:0004818">
    <property type="term" value="F:glutamate-tRNA ligase activity"/>
    <property type="evidence" value="ECO:0000318"/>
    <property type="project" value="GO_Central"/>
</dbReference>
<dbReference type="GO" id="GO:0000049">
    <property type="term" value="F:tRNA binding"/>
    <property type="evidence" value="ECO:0007669"/>
    <property type="project" value="InterPro"/>
</dbReference>
<dbReference type="GO" id="GO:0008270">
    <property type="term" value="F:zinc ion binding"/>
    <property type="evidence" value="ECO:0007669"/>
    <property type="project" value="InterPro"/>
</dbReference>
<dbReference type="GO" id="GO:0006424">
    <property type="term" value="P:glutamyl-tRNA aminoacylation"/>
    <property type="evidence" value="ECO:0000318"/>
    <property type="project" value="GO_Central"/>
</dbReference>
<dbReference type="CDD" id="cd00808">
    <property type="entry name" value="GluRS_core"/>
    <property type="match status" value="1"/>
</dbReference>
<dbReference type="FunFam" id="1.10.10.350:FF:000002">
    <property type="entry name" value="Glutamate--tRNA ligase"/>
    <property type="match status" value="1"/>
</dbReference>
<dbReference type="FunFam" id="3.40.50.620:FF:000007">
    <property type="entry name" value="Glutamate--tRNA ligase"/>
    <property type="match status" value="1"/>
</dbReference>
<dbReference type="Gene3D" id="1.10.10.350">
    <property type="match status" value="1"/>
</dbReference>
<dbReference type="Gene3D" id="3.40.50.620">
    <property type="entry name" value="HUPs"/>
    <property type="match status" value="1"/>
</dbReference>
<dbReference type="HAMAP" id="MF_00022">
    <property type="entry name" value="Glu_tRNA_synth_type1"/>
    <property type="match status" value="1"/>
</dbReference>
<dbReference type="InterPro" id="IPR045462">
    <property type="entry name" value="aa-tRNA-synth_I_cd-bd"/>
</dbReference>
<dbReference type="InterPro" id="IPR020751">
    <property type="entry name" value="aa-tRNA-synth_I_codon-bd_sub2"/>
</dbReference>
<dbReference type="InterPro" id="IPR001412">
    <property type="entry name" value="aa-tRNA-synth_I_CS"/>
</dbReference>
<dbReference type="InterPro" id="IPR008925">
    <property type="entry name" value="aa_tRNA-synth_I_cd-bd_sf"/>
</dbReference>
<dbReference type="InterPro" id="IPR004527">
    <property type="entry name" value="Glu-tRNA-ligase_bac/mito"/>
</dbReference>
<dbReference type="InterPro" id="IPR000924">
    <property type="entry name" value="Glu/Gln-tRNA-synth"/>
</dbReference>
<dbReference type="InterPro" id="IPR020058">
    <property type="entry name" value="Glu/Gln-tRNA-synth_Ib_cat-dom"/>
</dbReference>
<dbReference type="InterPro" id="IPR049940">
    <property type="entry name" value="GluQ/Sye"/>
</dbReference>
<dbReference type="InterPro" id="IPR033910">
    <property type="entry name" value="GluRS_core"/>
</dbReference>
<dbReference type="InterPro" id="IPR014729">
    <property type="entry name" value="Rossmann-like_a/b/a_fold"/>
</dbReference>
<dbReference type="NCBIfam" id="TIGR00464">
    <property type="entry name" value="gltX_bact"/>
    <property type="match status" value="1"/>
</dbReference>
<dbReference type="PANTHER" id="PTHR43311">
    <property type="entry name" value="GLUTAMATE--TRNA LIGASE"/>
    <property type="match status" value="1"/>
</dbReference>
<dbReference type="PANTHER" id="PTHR43311:SF2">
    <property type="entry name" value="GLUTAMATE--TRNA LIGASE, MITOCHONDRIAL-RELATED"/>
    <property type="match status" value="1"/>
</dbReference>
<dbReference type="Pfam" id="PF19269">
    <property type="entry name" value="Anticodon_2"/>
    <property type="match status" value="1"/>
</dbReference>
<dbReference type="Pfam" id="PF00749">
    <property type="entry name" value="tRNA-synt_1c"/>
    <property type="match status" value="1"/>
</dbReference>
<dbReference type="PRINTS" id="PR00987">
    <property type="entry name" value="TRNASYNTHGLU"/>
</dbReference>
<dbReference type="SUPFAM" id="SSF48163">
    <property type="entry name" value="An anticodon-binding domain of class I aminoacyl-tRNA synthetases"/>
    <property type="match status" value="1"/>
</dbReference>
<dbReference type="SUPFAM" id="SSF52374">
    <property type="entry name" value="Nucleotidylyl transferase"/>
    <property type="match status" value="1"/>
</dbReference>
<dbReference type="PROSITE" id="PS00178">
    <property type="entry name" value="AA_TRNA_LIGASE_I"/>
    <property type="match status" value="1"/>
</dbReference>
<sequence length="486" mass="55912">MSKDIRVRYAPSPTGLLHIGNARTALFNYLYARHHGGTFLIRIEDTDRKRHVEDGERSQLENLRWLGMDWDESPESHENYRQSERLDLYQKYIDQLLAEGKAYKSYVTEEELAAERERQEVAGETPRYINEYLGMSEEEKAAYIAEREAAGIIPTVRLAVNESGIYKWHDMVKGDIEFEGGNIGGDWIIQKKDGYPTYNFAVAIDDHDMQISHVIRGDDHIANTPKQLMVYEALGWEAPEFGHMTLIINSETGKKLSKRDTNTLQFIEDYRKKGYLPEAVFNFIALLGWNPGGEDEIFSREELIKLFDENRLSKSPAAFDQKKLDWMSNDYIKNADLETIFEMAKPFLEEAGRLTDKAEKLVELYKPQMKSVDEIIPLTDLFFSDFPELTEAEREVMTGETVPTVLEAFKAKLEAMTDDKFVTENIFPQIKAVQKETGIKGKNLFMPIRIAVSGEMHGPELPDTIFLLGREKSIQHIENMLKEISK</sequence>
<keyword id="KW-0030">Aminoacyl-tRNA synthetase</keyword>
<keyword id="KW-0067">ATP-binding</keyword>
<keyword id="KW-0963">Cytoplasm</keyword>
<keyword id="KW-0436">Ligase</keyword>
<keyword id="KW-0547">Nucleotide-binding</keyword>
<keyword id="KW-0648">Protein biosynthesis</keyword>
<keyword id="KW-1185">Reference proteome</keyword>
<feature type="chain" id="PRO_0000119666" description="Glutamate--tRNA ligase">
    <location>
        <begin position="1"/>
        <end position="486"/>
    </location>
</feature>
<feature type="short sequence motif" description="'HIGH' region" evidence="1">
    <location>
        <begin position="11"/>
        <end position="21"/>
    </location>
</feature>
<feature type="short sequence motif" description="'KMSKS' region" evidence="1">
    <location>
        <begin position="255"/>
        <end position="259"/>
    </location>
</feature>
<feature type="binding site" evidence="1">
    <location>
        <position position="258"/>
    </location>
    <ligand>
        <name>ATP</name>
        <dbReference type="ChEBI" id="CHEBI:30616"/>
    </ligand>
</feature>
<gene>
    <name evidence="1" type="primary">gltX</name>
    <name type="ordered locus">spr1881</name>
</gene>
<organism>
    <name type="scientific">Streptococcus pneumoniae (strain ATCC BAA-255 / R6)</name>
    <dbReference type="NCBI Taxonomy" id="171101"/>
    <lineage>
        <taxon>Bacteria</taxon>
        <taxon>Bacillati</taxon>
        <taxon>Bacillota</taxon>
        <taxon>Bacilli</taxon>
        <taxon>Lactobacillales</taxon>
        <taxon>Streptococcaceae</taxon>
        <taxon>Streptococcus</taxon>
    </lineage>
</organism>
<protein>
    <recommendedName>
        <fullName evidence="1">Glutamate--tRNA ligase</fullName>
        <ecNumber evidence="1">6.1.1.17</ecNumber>
    </recommendedName>
    <alternativeName>
        <fullName evidence="1">Glutamyl-tRNA synthetase</fullName>
        <shortName evidence="1">GluRS</shortName>
    </alternativeName>
</protein>
<proteinExistence type="inferred from homology"/>
<evidence type="ECO:0000255" key="1">
    <source>
        <dbReference type="HAMAP-Rule" id="MF_00022"/>
    </source>
</evidence>
<reference key="1">
    <citation type="journal article" date="2001" name="J. Bacteriol.">
        <title>Genome of the bacterium Streptococcus pneumoniae strain R6.</title>
        <authorList>
            <person name="Hoskins J."/>
            <person name="Alborn W.E. Jr."/>
            <person name="Arnold J."/>
            <person name="Blaszczak L.C."/>
            <person name="Burgett S."/>
            <person name="DeHoff B.S."/>
            <person name="Estrem S.T."/>
            <person name="Fritz L."/>
            <person name="Fu D.-J."/>
            <person name="Fuller W."/>
            <person name="Geringer C."/>
            <person name="Gilmour R."/>
            <person name="Glass J.S."/>
            <person name="Khoja H."/>
            <person name="Kraft A.R."/>
            <person name="Lagace R.E."/>
            <person name="LeBlanc D.J."/>
            <person name="Lee L.N."/>
            <person name="Lefkowitz E.J."/>
            <person name="Lu J."/>
            <person name="Matsushima P."/>
            <person name="McAhren S.M."/>
            <person name="McHenney M."/>
            <person name="McLeaster K."/>
            <person name="Mundy C.W."/>
            <person name="Nicas T.I."/>
            <person name="Norris F.H."/>
            <person name="O'Gara M."/>
            <person name="Peery R.B."/>
            <person name="Robertson G.T."/>
            <person name="Rockey P."/>
            <person name="Sun P.-M."/>
            <person name="Winkler M.E."/>
            <person name="Yang Y."/>
            <person name="Young-Bellido M."/>
            <person name="Zhao G."/>
            <person name="Zook C.A."/>
            <person name="Baltz R.H."/>
            <person name="Jaskunas S.R."/>
            <person name="Rosteck P.R. Jr."/>
            <person name="Skatrud P.L."/>
            <person name="Glass J.I."/>
        </authorList>
    </citation>
    <scope>NUCLEOTIDE SEQUENCE [LARGE SCALE GENOMIC DNA]</scope>
    <source>
        <strain>ATCC BAA-255 / R6</strain>
    </source>
</reference>